<organism>
    <name type="scientific">Homo sapiens</name>
    <name type="common">Human</name>
    <dbReference type="NCBI Taxonomy" id="9606"/>
    <lineage>
        <taxon>Eukaryota</taxon>
        <taxon>Metazoa</taxon>
        <taxon>Chordata</taxon>
        <taxon>Craniata</taxon>
        <taxon>Vertebrata</taxon>
        <taxon>Euteleostomi</taxon>
        <taxon>Mammalia</taxon>
        <taxon>Eutheria</taxon>
        <taxon>Euarchontoglires</taxon>
        <taxon>Primates</taxon>
        <taxon>Haplorrhini</taxon>
        <taxon>Catarrhini</taxon>
        <taxon>Hominidae</taxon>
        <taxon>Homo</taxon>
    </lineage>
</organism>
<name>FOXJ2_HUMAN</name>
<evidence type="ECO:0000250" key="1">
    <source>
        <dbReference type="UniProtKB" id="Q9ES18"/>
    </source>
</evidence>
<evidence type="ECO:0000255" key="2">
    <source>
        <dbReference type="PROSITE-ProRule" id="PRU00089"/>
    </source>
</evidence>
<evidence type="ECO:0000256" key="3">
    <source>
        <dbReference type="SAM" id="MobiDB-lite"/>
    </source>
</evidence>
<evidence type="ECO:0000269" key="4">
    <source>
    </source>
</evidence>
<evidence type="ECO:0000269" key="5">
    <source>
    </source>
</evidence>
<evidence type="ECO:0000303" key="6">
    <source>
    </source>
</evidence>
<evidence type="ECO:0007744" key="7">
    <source>
    </source>
</evidence>
<evidence type="ECO:0007744" key="8">
    <source>
    </source>
</evidence>
<evidence type="ECO:0007744" key="9">
    <source>
    </source>
</evidence>
<evidence type="ECO:0007744" key="10">
    <source>
    </source>
</evidence>
<evidence type="ECO:0007744" key="11">
    <source>
    </source>
</evidence>
<comment type="function">
    <molecule>Isoform FOXJ2.L</molecule>
    <text evidence="1 4 5">Transcriptional activator. Able to bind to two different type of DNA binding sites. More effective than isoform FOXJ2.S in transcriptional activation (PubMed:10777590, PubMed:10966786). Plays an important role in spermatogenesis, especially in spermatocyte meiosis (By similarity).</text>
</comment>
<comment type="function">
    <molecule>Isoform FOXJ2.S</molecule>
    <text evidence="5">Transcriptional activator.</text>
</comment>
<comment type="interaction">
    <interactant intactId="EBI-2869608">
        <id>Q9P0K8</id>
    </interactant>
    <interactant intactId="EBI-747012">
        <id>Q9H0L4</id>
        <label>CSTF2T</label>
    </interactant>
    <organismsDiffer>false</organismsDiffer>
    <experiments>3</experiments>
</comment>
<comment type="interaction">
    <interactant intactId="EBI-2869608">
        <id>Q9P0K8</id>
    </interactant>
    <interactant intactId="EBI-1175354">
        <id>Q9H6Z9</id>
        <label>EGLN3</label>
    </interactant>
    <organismsDiffer>false</organismsDiffer>
    <experiments>6</experiments>
</comment>
<comment type="interaction">
    <interactant intactId="EBI-2869608">
        <id>Q9P0K8</id>
    </interactant>
    <interactant intactId="EBI-2869608">
        <id>Q9P0K8</id>
        <label>FOXJ2</label>
    </interactant>
    <organismsDiffer>false</organismsDiffer>
    <experiments>2</experiments>
</comment>
<comment type="subcellular location">
    <subcellularLocation>
        <location>Nucleus</location>
    </subcellularLocation>
</comment>
<comment type="alternative products">
    <event type="alternative splicing"/>
    <isoform>
        <id>Q9P0K8-1</id>
        <name>FOXJ2.L</name>
        <name>FHX.L</name>
        <sequence type="displayed"/>
    </isoform>
    <isoform>
        <id>Q9P0K8-2</id>
        <name>FOXJ2.S</name>
        <name>FHX.S</name>
        <sequence type="described" ref="VSP_001544"/>
    </isoform>
</comment>
<comment type="tissue specificity">
    <text>Widely expressed.</text>
</comment>
<gene>
    <name type="primary">FOXJ2</name>
    <name type="synonym">FHX</name>
</gene>
<protein>
    <recommendedName>
        <fullName>Forkhead box protein J2</fullName>
    </recommendedName>
    <alternativeName>
        <fullName>Fork head homologous X</fullName>
    </alternativeName>
</protein>
<feature type="initiator methionine" description="Removed" evidence="9">
    <location>
        <position position="1"/>
    </location>
</feature>
<feature type="chain" id="PRO_0000091853" description="Forkhead box protein J2">
    <location>
        <begin position="2"/>
        <end position="574"/>
    </location>
</feature>
<feature type="DNA-binding region" description="Fork-head" evidence="2">
    <location>
        <begin position="66"/>
        <end position="143"/>
    </location>
</feature>
<feature type="region of interest" description="Disordered" evidence="3">
    <location>
        <begin position="26"/>
        <end position="61"/>
    </location>
</feature>
<feature type="region of interest" description="Disordered" evidence="3">
    <location>
        <begin position="125"/>
        <end position="233"/>
    </location>
</feature>
<feature type="region of interest" description="Disordered" evidence="3">
    <location>
        <begin position="267"/>
        <end position="408"/>
    </location>
</feature>
<feature type="region of interest" description="Disordered" evidence="3">
    <location>
        <begin position="537"/>
        <end position="574"/>
    </location>
</feature>
<feature type="compositionally biased region" description="Low complexity" evidence="3">
    <location>
        <begin position="28"/>
        <end position="39"/>
    </location>
</feature>
<feature type="compositionally biased region" description="Polar residues" evidence="3">
    <location>
        <begin position="45"/>
        <end position="54"/>
    </location>
</feature>
<feature type="compositionally biased region" description="Polar residues" evidence="3">
    <location>
        <begin position="191"/>
        <end position="206"/>
    </location>
</feature>
<feature type="compositionally biased region" description="Low complexity" evidence="3">
    <location>
        <begin position="207"/>
        <end position="223"/>
    </location>
</feature>
<feature type="compositionally biased region" description="Low complexity" evidence="3">
    <location>
        <begin position="267"/>
        <end position="276"/>
    </location>
</feature>
<feature type="compositionally biased region" description="Low complexity" evidence="3">
    <location>
        <begin position="315"/>
        <end position="335"/>
    </location>
</feature>
<feature type="compositionally biased region" description="Pro residues" evidence="3">
    <location>
        <begin position="358"/>
        <end position="370"/>
    </location>
</feature>
<feature type="compositionally biased region" description="Basic residues" evidence="3">
    <location>
        <begin position="375"/>
        <end position="384"/>
    </location>
</feature>
<feature type="compositionally biased region" description="Acidic residues" evidence="3">
    <location>
        <begin position="563"/>
        <end position="574"/>
    </location>
</feature>
<feature type="modified residue" description="N-acetylalanine" evidence="9">
    <location>
        <position position="2"/>
    </location>
</feature>
<feature type="modified residue" description="Phosphoserine" evidence="9">
    <location>
        <position position="3"/>
    </location>
</feature>
<feature type="modified residue" description="Phosphoserine" evidence="10 11">
    <location>
        <position position="46"/>
    </location>
</feature>
<feature type="modified residue" description="Phosphoserine" evidence="7">
    <location>
        <position position="161"/>
    </location>
</feature>
<feature type="modified residue" description="Phosphoserine" evidence="11">
    <location>
        <position position="164"/>
    </location>
</feature>
<feature type="modified residue" description="Phosphoserine" evidence="8 10">
    <location>
        <position position="172"/>
    </location>
</feature>
<feature type="splice variant" id="VSP_001544" description="In isoform FOXJ2.S." evidence="6">
    <original>VNSYGHPQAPHLYPGPSPMYPIPTQDSAGYNRPAHHMVPRPSVPPPGANEEIPDDFDWDLIT</original>
    <variation>GTAPSQLPWRWRLC</variation>
    <location>
        <begin position="513"/>
        <end position="574"/>
    </location>
</feature>
<feature type="sequence variant" id="VAR_049162" description="In dbSNP:rs879211194.">
    <original>P</original>
    <variation>R</variation>
    <location>
        <position position="229"/>
    </location>
</feature>
<feature type="sequence variant" id="VAR_021842" description="In dbSNP:rs2277415.">
    <original>P</original>
    <variation>S</variation>
    <location>
        <position position="310"/>
    </location>
</feature>
<sequence>MASDLESSLTSIDWLPQLTLRATIEKLGSASQAGPPGSSRKCSPGSPTDPNATLSKDEAAVHQDGKPRYSYATLITYAINSSPAKKMTLSEIYRWICDNFPYYKNAGIGWKNSIRHNLSLNKCFRKVPRPRDDPGKGSYWTIDTCPDISRKRRHPPDDDLSQDSPEQEASKSPRGGVAGSGEASLPPEGNPQMSLQSPTSIASYSQGTGSVDGGAVAAGASGRESAEGPPPLYNTNHDFKFSYSEINFQDLSWSFRNLYKSMLEKSSSSSQHGFSSLLGDIPPSNNYYMYQQQQPPPPQQQQQQQQPPQPPPQQSQPQQQQAPAQGPSAVGGAPPLHTPSTDGCTPPGGKQAGAEGYGPPPVMAMHPPPLQHGGYHPHQHHPHSHPAQQPPPPQPQAQGQAPINNTGFAFPSDWCSNIDSLKESFKMVNRLNWSSIEQSQFSELMESLRQAEQKNWTLDQHHIANLCDSLNHFLTQTGHVPPQGGTHRPPAPARIADSCALTSGKQESAMSQVNSYGHPQAPHLYPGPSPMYPIPTQDSAGYNRPAHHMVPRPSVPPPGANEEIPDDFDWDLIT</sequence>
<proteinExistence type="evidence at protein level"/>
<dbReference type="EMBL" id="AF155132">
    <property type="protein sequence ID" value="AAF65927.1"/>
    <property type="molecule type" value="mRNA"/>
</dbReference>
<dbReference type="EMBL" id="AF155133">
    <property type="protein sequence ID" value="AAK49016.1"/>
    <property type="molecule type" value="mRNA"/>
</dbReference>
<dbReference type="EMBL" id="BC126396">
    <property type="protein sequence ID" value="AAI26397.1"/>
    <property type="molecule type" value="mRNA"/>
</dbReference>
<dbReference type="EMBL" id="BC136305">
    <property type="protein sequence ID" value="AAI36306.1"/>
    <property type="molecule type" value="mRNA"/>
</dbReference>
<dbReference type="EMBL" id="AL161978">
    <property type="protein sequence ID" value="CAB82315.1"/>
    <property type="molecule type" value="mRNA"/>
</dbReference>
<dbReference type="CCDS" id="CCDS8587.1">
    <molecule id="Q9P0K8-1"/>
</dbReference>
<dbReference type="PIR" id="T47161">
    <property type="entry name" value="T47161"/>
</dbReference>
<dbReference type="RefSeq" id="NP_060886.1">
    <molecule id="Q9P0K8-1"/>
    <property type="nucleotide sequence ID" value="NM_018416.3"/>
</dbReference>
<dbReference type="RefSeq" id="XP_047285108.1">
    <molecule id="Q9P0K8-1"/>
    <property type="nucleotide sequence ID" value="XM_047429152.1"/>
</dbReference>
<dbReference type="RefSeq" id="XP_054228531.1">
    <molecule id="Q9P0K8-1"/>
    <property type="nucleotide sequence ID" value="XM_054372556.1"/>
</dbReference>
<dbReference type="SMR" id="Q9P0K8"/>
<dbReference type="BioGRID" id="120920">
    <property type="interactions" value="81"/>
</dbReference>
<dbReference type="FunCoup" id="Q9P0K8">
    <property type="interactions" value="2037"/>
</dbReference>
<dbReference type="IntAct" id="Q9P0K8">
    <property type="interactions" value="74"/>
</dbReference>
<dbReference type="MINT" id="Q9P0K8"/>
<dbReference type="STRING" id="9606.ENSP00000162391"/>
<dbReference type="GlyGen" id="Q9P0K8">
    <property type="glycosylation" value="3 sites, 1 O-linked glycan (3 sites)"/>
</dbReference>
<dbReference type="iPTMnet" id="Q9P0K8"/>
<dbReference type="PhosphoSitePlus" id="Q9P0K8"/>
<dbReference type="BioMuta" id="FOXJ2"/>
<dbReference type="DMDM" id="13626933"/>
<dbReference type="jPOST" id="Q9P0K8"/>
<dbReference type="MassIVE" id="Q9P0K8"/>
<dbReference type="PaxDb" id="9606-ENSP00000162391"/>
<dbReference type="PeptideAtlas" id="Q9P0K8"/>
<dbReference type="ProteomicsDB" id="83564">
    <molecule id="Q9P0K8-1"/>
</dbReference>
<dbReference type="ProteomicsDB" id="83565">
    <molecule id="Q9P0K8-2"/>
</dbReference>
<dbReference type="Pumba" id="Q9P0K8"/>
<dbReference type="Antibodypedia" id="1748">
    <property type="antibodies" value="164 antibodies from 20 providers"/>
</dbReference>
<dbReference type="DNASU" id="55810"/>
<dbReference type="Ensembl" id="ENST00000162391.8">
    <molecule id="Q9P0K8-1"/>
    <property type="protein sequence ID" value="ENSP00000162391.3"/>
    <property type="gene ID" value="ENSG00000065970.9"/>
</dbReference>
<dbReference type="Ensembl" id="ENST00000428177.2">
    <molecule id="Q9P0K8-2"/>
    <property type="protein sequence ID" value="ENSP00000403411.2"/>
    <property type="gene ID" value="ENSG00000065970.9"/>
</dbReference>
<dbReference type="GeneID" id="55810"/>
<dbReference type="KEGG" id="hsa:55810"/>
<dbReference type="MANE-Select" id="ENST00000162391.8">
    <property type="protein sequence ID" value="ENSP00000162391.3"/>
    <property type="RefSeq nucleotide sequence ID" value="NM_018416.3"/>
    <property type="RefSeq protein sequence ID" value="NP_060886.1"/>
</dbReference>
<dbReference type="UCSC" id="uc001qtt.2">
    <molecule id="Q9P0K8-1"/>
    <property type="organism name" value="human"/>
</dbReference>
<dbReference type="AGR" id="HGNC:24818"/>
<dbReference type="CTD" id="55810"/>
<dbReference type="DisGeNET" id="55810"/>
<dbReference type="GeneCards" id="FOXJ2"/>
<dbReference type="HGNC" id="HGNC:24818">
    <property type="gene designation" value="FOXJ2"/>
</dbReference>
<dbReference type="HPA" id="ENSG00000065970">
    <property type="expression patterns" value="Low tissue specificity"/>
</dbReference>
<dbReference type="MIM" id="619162">
    <property type="type" value="gene"/>
</dbReference>
<dbReference type="neXtProt" id="NX_Q9P0K8"/>
<dbReference type="OpenTargets" id="ENSG00000065970"/>
<dbReference type="PharmGKB" id="PA134982817"/>
<dbReference type="VEuPathDB" id="HostDB:ENSG00000065970"/>
<dbReference type="eggNOG" id="KOG2294">
    <property type="taxonomic scope" value="Eukaryota"/>
</dbReference>
<dbReference type="GeneTree" id="ENSGT00940000161053"/>
<dbReference type="HOGENOM" id="CLU_034661_0_0_1"/>
<dbReference type="InParanoid" id="Q9P0K8"/>
<dbReference type="OMA" id="QGPHLYP"/>
<dbReference type="OrthoDB" id="10029558at2759"/>
<dbReference type="PAN-GO" id="Q9P0K8">
    <property type="GO annotations" value="4 GO annotations based on evolutionary models"/>
</dbReference>
<dbReference type="PhylomeDB" id="Q9P0K8"/>
<dbReference type="TreeFam" id="TF333250"/>
<dbReference type="PathwayCommons" id="Q9P0K8"/>
<dbReference type="SignaLink" id="Q9P0K8"/>
<dbReference type="BioGRID-ORCS" id="55810">
    <property type="hits" value="13 hits in 1176 CRISPR screens"/>
</dbReference>
<dbReference type="ChiTaRS" id="FOXJ2">
    <property type="organism name" value="human"/>
</dbReference>
<dbReference type="GeneWiki" id="FOXJ2"/>
<dbReference type="GenomeRNAi" id="55810"/>
<dbReference type="Pharos" id="Q9P0K8">
    <property type="development level" value="Tbio"/>
</dbReference>
<dbReference type="PRO" id="PR:Q9P0K8"/>
<dbReference type="Proteomes" id="UP000005640">
    <property type="component" value="Chromosome 12"/>
</dbReference>
<dbReference type="RNAct" id="Q9P0K8">
    <property type="molecule type" value="protein"/>
</dbReference>
<dbReference type="Bgee" id="ENSG00000065970">
    <property type="expression patterns" value="Expressed in nipple and 210 other cell types or tissues"/>
</dbReference>
<dbReference type="GO" id="GO:0000785">
    <property type="term" value="C:chromatin"/>
    <property type="evidence" value="ECO:0000247"/>
    <property type="project" value="NTNU_SB"/>
</dbReference>
<dbReference type="GO" id="GO:0001650">
    <property type="term" value="C:fibrillar center"/>
    <property type="evidence" value="ECO:0000314"/>
    <property type="project" value="HPA"/>
</dbReference>
<dbReference type="GO" id="GO:0005654">
    <property type="term" value="C:nucleoplasm"/>
    <property type="evidence" value="ECO:0000314"/>
    <property type="project" value="HPA"/>
</dbReference>
<dbReference type="GO" id="GO:0005634">
    <property type="term" value="C:nucleus"/>
    <property type="evidence" value="ECO:0000314"/>
    <property type="project" value="BHF-UCL"/>
</dbReference>
<dbReference type="GO" id="GO:0001228">
    <property type="term" value="F:DNA-binding transcription activator activity, RNA polymerase II-specific"/>
    <property type="evidence" value="ECO:0000314"/>
    <property type="project" value="NTNU_SB"/>
</dbReference>
<dbReference type="GO" id="GO:0000981">
    <property type="term" value="F:DNA-binding transcription factor activity, RNA polymerase II-specific"/>
    <property type="evidence" value="ECO:0000247"/>
    <property type="project" value="NTNU_SB"/>
</dbReference>
<dbReference type="GO" id="GO:0042802">
    <property type="term" value="F:identical protein binding"/>
    <property type="evidence" value="ECO:0000353"/>
    <property type="project" value="IntAct"/>
</dbReference>
<dbReference type="GO" id="GO:0000978">
    <property type="term" value="F:RNA polymerase II cis-regulatory region sequence-specific DNA binding"/>
    <property type="evidence" value="ECO:0000314"/>
    <property type="project" value="NTNU_SB"/>
</dbReference>
<dbReference type="GO" id="GO:0043565">
    <property type="term" value="F:sequence-specific DNA binding"/>
    <property type="evidence" value="ECO:0000314"/>
    <property type="project" value="UniProtKB"/>
</dbReference>
<dbReference type="GO" id="GO:1990837">
    <property type="term" value="F:sequence-specific double-stranded DNA binding"/>
    <property type="evidence" value="ECO:0000314"/>
    <property type="project" value="ARUK-UCL"/>
</dbReference>
<dbReference type="GO" id="GO:0030154">
    <property type="term" value="P:cell differentiation"/>
    <property type="evidence" value="ECO:0007669"/>
    <property type="project" value="UniProtKB-KW"/>
</dbReference>
<dbReference type="GO" id="GO:0007141">
    <property type="term" value="P:male meiosis I"/>
    <property type="evidence" value="ECO:0000250"/>
    <property type="project" value="UniProtKB"/>
</dbReference>
<dbReference type="GO" id="GO:0016525">
    <property type="term" value="P:negative regulation of angiogenesis"/>
    <property type="evidence" value="ECO:0000315"/>
    <property type="project" value="BHF-UCL"/>
</dbReference>
<dbReference type="GO" id="GO:0110059">
    <property type="term" value="P:negative regulation of blood vessel endothelial cell differentiation"/>
    <property type="evidence" value="ECO:0000314"/>
    <property type="project" value="BHF-UCL"/>
</dbReference>
<dbReference type="GO" id="GO:0045893">
    <property type="term" value="P:positive regulation of DNA-templated transcription"/>
    <property type="evidence" value="ECO:0000314"/>
    <property type="project" value="UniProtKB"/>
</dbReference>
<dbReference type="GO" id="GO:0045944">
    <property type="term" value="P:positive regulation of transcription by RNA polymerase II"/>
    <property type="evidence" value="ECO:0000314"/>
    <property type="project" value="NTNU_SB"/>
</dbReference>
<dbReference type="GO" id="GO:1904707">
    <property type="term" value="P:positive regulation of vascular associated smooth muscle cell proliferation"/>
    <property type="evidence" value="ECO:0000314"/>
    <property type="project" value="BHF-UCL"/>
</dbReference>
<dbReference type="GO" id="GO:0006357">
    <property type="term" value="P:regulation of transcription by RNA polymerase II"/>
    <property type="evidence" value="ECO:0000318"/>
    <property type="project" value="GO_Central"/>
</dbReference>
<dbReference type="GO" id="GO:0007283">
    <property type="term" value="P:spermatogenesis"/>
    <property type="evidence" value="ECO:0000250"/>
    <property type="project" value="UniProtKB"/>
</dbReference>
<dbReference type="CDD" id="cd20051">
    <property type="entry name" value="FH_FOXJ2"/>
    <property type="match status" value="1"/>
</dbReference>
<dbReference type="FunFam" id="1.10.10.10:FF:000088">
    <property type="entry name" value="Forkhead box protein J3"/>
    <property type="match status" value="1"/>
</dbReference>
<dbReference type="Gene3D" id="1.10.10.10">
    <property type="entry name" value="Winged helix-like DNA-binding domain superfamily/Winged helix DNA-binding domain"/>
    <property type="match status" value="1"/>
</dbReference>
<dbReference type="InterPro" id="IPR047393">
    <property type="entry name" value="FH_FOXJ2"/>
</dbReference>
<dbReference type="InterPro" id="IPR001766">
    <property type="entry name" value="Fork_head_dom"/>
</dbReference>
<dbReference type="InterPro" id="IPR045912">
    <property type="entry name" value="FOXJ2/3-like"/>
</dbReference>
<dbReference type="InterPro" id="IPR030456">
    <property type="entry name" value="TF_fork_head_CS_2"/>
</dbReference>
<dbReference type="InterPro" id="IPR036388">
    <property type="entry name" value="WH-like_DNA-bd_sf"/>
</dbReference>
<dbReference type="InterPro" id="IPR036390">
    <property type="entry name" value="WH_DNA-bd_sf"/>
</dbReference>
<dbReference type="PANTHER" id="PTHR46078:SF1">
    <property type="entry name" value="FORKHEAD BOX PROTEIN J2"/>
    <property type="match status" value="1"/>
</dbReference>
<dbReference type="PANTHER" id="PTHR46078">
    <property type="entry name" value="FORKHEAD BOX PROTEIN J2 FAMILY MEMBER"/>
    <property type="match status" value="1"/>
</dbReference>
<dbReference type="Pfam" id="PF00250">
    <property type="entry name" value="Forkhead"/>
    <property type="match status" value="1"/>
</dbReference>
<dbReference type="PRINTS" id="PR00053">
    <property type="entry name" value="FORKHEAD"/>
</dbReference>
<dbReference type="SMART" id="SM00339">
    <property type="entry name" value="FH"/>
    <property type="match status" value="1"/>
</dbReference>
<dbReference type="SUPFAM" id="SSF46785">
    <property type="entry name" value="Winged helix' DNA-binding domain"/>
    <property type="match status" value="1"/>
</dbReference>
<dbReference type="PROSITE" id="PS00658">
    <property type="entry name" value="FORK_HEAD_2"/>
    <property type="match status" value="1"/>
</dbReference>
<dbReference type="PROSITE" id="PS50039">
    <property type="entry name" value="FORK_HEAD_3"/>
    <property type="match status" value="1"/>
</dbReference>
<reference key="1">
    <citation type="journal article" date="2000" name="J. Biol. Chem.">
        <title>FHX, a novel fork head factor with a dual DNA binding specificity.</title>
        <authorList>
            <person name="Perez-Sanchez C."/>
            <person name="Gomez-Ferreria M.A."/>
            <person name="de la Fuente C.A."/>
            <person name="Granadino B."/>
            <person name="Velasco G."/>
            <person name="Esteban A."/>
            <person name="Rey-Campos J."/>
        </authorList>
    </citation>
    <scope>NUCLEOTIDE SEQUENCE [MRNA] (ISOFORM FOXJ2.L)</scope>
    <scope>FUNCTION (ISOFORM FOXJ2.L)</scope>
</reference>
<reference key="2">
    <citation type="journal article" date="2000" name="J. Mol. Biol.">
        <title>FHX.L and FHX.S, two isoforms of the human fork-head factor FHX (FOXJ2) with differential activity.</title>
        <authorList>
            <person name="Perez-Sanchez C."/>
            <person name="de la Fuente C.A."/>
            <person name="Gomez-Ferreria M.A."/>
            <person name="Granadino B."/>
            <person name="Rey-Campos J."/>
        </authorList>
    </citation>
    <scope>NUCLEOTIDE SEQUENCE [MRNA] (ISOFORM FOXJ2.S)</scope>
    <scope>FUNCTION (ISOFORMS FOXJ2.L AND FOXJ2.S)</scope>
</reference>
<reference key="3">
    <citation type="journal article" date="2004" name="Genome Res.">
        <title>The status, quality, and expansion of the NIH full-length cDNA project: the Mammalian Gene Collection (MGC).</title>
        <authorList>
            <consortium name="The MGC Project Team"/>
        </authorList>
    </citation>
    <scope>NUCLEOTIDE SEQUENCE [LARGE SCALE MRNA] (ISOFORM FOXJ2.L)</scope>
    <source>
        <tissue>Lung</tissue>
    </source>
</reference>
<reference key="4">
    <citation type="journal article" date="2007" name="BMC Genomics">
        <title>The full-ORF clone resource of the German cDNA consortium.</title>
        <authorList>
            <person name="Bechtel S."/>
            <person name="Rosenfelder H."/>
            <person name="Duda A."/>
            <person name="Schmidt C.P."/>
            <person name="Ernst U."/>
            <person name="Wellenreuther R."/>
            <person name="Mehrle A."/>
            <person name="Schuster C."/>
            <person name="Bahr A."/>
            <person name="Bloecker H."/>
            <person name="Heubner D."/>
            <person name="Hoerlein A."/>
            <person name="Michel G."/>
            <person name="Wedler H."/>
            <person name="Koehrer K."/>
            <person name="Ottenwaelder B."/>
            <person name="Poustka A."/>
            <person name="Wiemann S."/>
            <person name="Schupp I."/>
        </authorList>
    </citation>
    <scope>NUCLEOTIDE SEQUENCE [LARGE SCALE MRNA] OF 458-574 (ISOFORM FOXJ2.L)</scope>
    <source>
        <tissue>Melanoma</tissue>
    </source>
</reference>
<reference key="5">
    <citation type="journal article" date="2007" name="Science">
        <title>ATM and ATR substrate analysis reveals extensive protein networks responsive to DNA damage.</title>
        <authorList>
            <person name="Matsuoka S."/>
            <person name="Ballif B.A."/>
            <person name="Smogorzewska A."/>
            <person name="McDonald E.R. III"/>
            <person name="Hurov K.E."/>
            <person name="Luo J."/>
            <person name="Bakalarski C.E."/>
            <person name="Zhao Z."/>
            <person name="Solimini N."/>
            <person name="Lerenthal Y."/>
            <person name="Shiloh Y."/>
            <person name="Gygi S.P."/>
            <person name="Elledge S.J."/>
        </authorList>
    </citation>
    <scope>PHOSPHORYLATION [LARGE SCALE ANALYSIS] AT SER-161</scope>
    <scope>IDENTIFICATION BY MASS SPECTROMETRY [LARGE SCALE ANALYSIS]</scope>
    <source>
        <tissue>Embryonic kidney</tissue>
    </source>
</reference>
<reference key="6">
    <citation type="journal article" date="2008" name="Proc. Natl. Acad. Sci. U.S.A.">
        <title>A quantitative atlas of mitotic phosphorylation.</title>
        <authorList>
            <person name="Dephoure N."/>
            <person name="Zhou C."/>
            <person name="Villen J."/>
            <person name="Beausoleil S.A."/>
            <person name="Bakalarski C.E."/>
            <person name="Elledge S.J."/>
            <person name="Gygi S.P."/>
        </authorList>
    </citation>
    <scope>IDENTIFICATION BY MASS SPECTROMETRY [LARGE SCALE ANALYSIS]</scope>
    <source>
        <tissue>Cervix carcinoma</tissue>
    </source>
</reference>
<reference key="7">
    <citation type="journal article" date="2009" name="Anal. Chem.">
        <title>Lys-N and trypsin cover complementary parts of the phosphoproteome in a refined SCX-based approach.</title>
        <authorList>
            <person name="Gauci S."/>
            <person name="Helbig A.O."/>
            <person name="Slijper M."/>
            <person name="Krijgsveld J."/>
            <person name="Heck A.J."/>
            <person name="Mohammed S."/>
        </authorList>
    </citation>
    <scope>IDENTIFICATION BY MASS SPECTROMETRY [LARGE SCALE ANALYSIS]</scope>
</reference>
<reference key="8">
    <citation type="journal article" date="2009" name="Sci. Signal.">
        <title>Quantitative phosphoproteomic analysis of T cell receptor signaling reveals system-wide modulation of protein-protein interactions.</title>
        <authorList>
            <person name="Mayya V."/>
            <person name="Lundgren D.H."/>
            <person name="Hwang S.-I."/>
            <person name="Rezaul K."/>
            <person name="Wu L."/>
            <person name="Eng J.K."/>
            <person name="Rodionov V."/>
            <person name="Han D.K."/>
        </authorList>
    </citation>
    <scope>PHOSPHORYLATION [LARGE SCALE ANALYSIS] AT SER-172</scope>
    <scope>IDENTIFICATION BY MASS SPECTROMETRY [LARGE SCALE ANALYSIS]</scope>
    <source>
        <tissue>Leukemic T-cell</tissue>
    </source>
</reference>
<reference key="9">
    <citation type="journal article" date="2010" name="Sci. Signal.">
        <title>Quantitative phosphoproteomics reveals widespread full phosphorylation site occupancy during mitosis.</title>
        <authorList>
            <person name="Olsen J.V."/>
            <person name="Vermeulen M."/>
            <person name="Santamaria A."/>
            <person name="Kumar C."/>
            <person name="Miller M.L."/>
            <person name="Jensen L.J."/>
            <person name="Gnad F."/>
            <person name="Cox J."/>
            <person name="Jensen T.S."/>
            <person name="Nigg E.A."/>
            <person name="Brunak S."/>
            <person name="Mann M."/>
        </authorList>
    </citation>
    <scope>ACETYLATION [LARGE SCALE ANALYSIS] AT ALA-2</scope>
    <scope>PHOSPHORYLATION [LARGE SCALE ANALYSIS] AT SER-3</scope>
    <scope>CLEAVAGE OF INITIATOR METHIONINE [LARGE SCALE ANALYSIS]</scope>
    <scope>IDENTIFICATION BY MASS SPECTROMETRY [LARGE SCALE ANALYSIS]</scope>
    <source>
        <tissue>Cervix carcinoma</tissue>
    </source>
</reference>
<reference key="10">
    <citation type="journal article" date="2013" name="J. Proteome Res.">
        <title>Toward a comprehensive characterization of a human cancer cell phosphoproteome.</title>
        <authorList>
            <person name="Zhou H."/>
            <person name="Di Palma S."/>
            <person name="Preisinger C."/>
            <person name="Peng M."/>
            <person name="Polat A.N."/>
            <person name="Heck A.J."/>
            <person name="Mohammed S."/>
        </authorList>
    </citation>
    <scope>PHOSPHORYLATION [LARGE SCALE ANALYSIS] AT SER-46 AND SER-172</scope>
    <scope>IDENTIFICATION BY MASS SPECTROMETRY [LARGE SCALE ANALYSIS]</scope>
    <source>
        <tissue>Cervix carcinoma</tissue>
        <tissue>Erythroleukemia</tissue>
    </source>
</reference>
<reference key="11">
    <citation type="journal article" date="2014" name="J. Proteomics">
        <title>An enzyme assisted RP-RPLC approach for in-depth analysis of human liver phosphoproteome.</title>
        <authorList>
            <person name="Bian Y."/>
            <person name="Song C."/>
            <person name="Cheng K."/>
            <person name="Dong M."/>
            <person name="Wang F."/>
            <person name="Huang J."/>
            <person name="Sun D."/>
            <person name="Wang L."/>
            <person name="Ye M."/>
            <person name="Zou H."/>
        </authorList>
    </citation>
    <scope>PHOSPHORYLATION [LARGE SCALE ANALYSIS] AT SER-46 AND SER-164</scope>
    <scope>IDENTIFICATION BY MASS SPECTROMETRY [LARGE SCALE ANALYSIS]</scope>
    <source>
        <tissue>Liver</tissue>
    </source>
</reference>
<keyword id="KW-0007">Acetylation</keyword>
<keyword id="KW-0010">Activator</keyword>
<keyword id="KW-0025">Alternative splicing</keyword>
<keyword id="KW-0221">Differentiation</keyword>
<keyword id="KW-0238">DNA-binding</keyword>
<keyword id="KW-0469">Meiosis</keyword>
<keyword id="KW-0539">Nucleus</keyword>
<keyword id="KW-0597">Phosphoprotein</keyword>
<keyword id="KW-1267">Proteomics identification</keyword>
<keyword id="KW-1185">Reference proteome</keyword>
<keyword id="KW-0744">Spermatogenesis</keyword>
<keyword id="KW-0804">Transcription</keyword>
<keyword id="KW-0805">Transcription regulation</keyword>
<accession>Q9P0K8</accession>
<accession>A0AVK4</accession>
<accession>B2RMP3</accession>
<accession>Q96PS9</accession>
<accession>Q9NSN5</accession>